<sequence>MRKVNCIKVITRAHTLGYCGGVRMAVRMAEHARAHHRGSVYTLGPLVHNPVTLARLRARGIECLDPAHLSFALHAPAAPGAAPHAVEEKTARTVVIRAHGVAPEVYEALERSGAQVVDATCPRVKESQRRAQGFAAQGLHVILAGDRNHGEIVGIEGYVRAGAAQACSHLPGGAPDGMLPQVQCFVVQNAREAAALPCLARAALLAQTTITQGEYDAIAAAARTRVRELTVARTICAATARRQAALRALAPTVEALLVIGGAHSANTQRLLHTARETSLPTWLVERVEDIPPDIYAFSAVGISAGASTPDCVIAAVEQALRTGGAPVASRVSSSALPKVSTCRAVCAAATSSVGSAGASGAVSPGAVRPFAVGSVR</sequence>
<name>ISPH_TREPA</name>
<evidence type="ECO:0000255" key="1">
    <source>
        <dbReference type="HAMAP-Rule" id="MF_00191"/>
    </source>
</evidence>
<feature type="chain" id="PRO_0000128886" description="4-hydroxy-3-methylbut-2-enyl diphosphate reductase">
    <location>
        <begin position="1"/>
        <end position="376"/>
    </location>
</feature>
<feature type="active site" description="Proton donor" evidence="1">
    <location>
        <position position="151"/>
    </location>
</feature>
<feature type="binding site" evidence="1">
    <location>
        <position position="19"/>
    </location>
    <ligand>
        <name>[4Fe-4S] cluster</name>
        <dbReference type="ChEBI" id="CHEBI:49883"/>
    </ligand>
</feature>
<feature type="binding site" evidence="1">
    <location>
        <position position="48"/>
    </location>
    <ligand>
        <name>(2E)-4-hydroxy-3-methylbut-2-enyl diphosphate</name>
        <dbReference type="ChEBI" id="CHEBI:128753"/>
    </ligand>
</feature>
<feature type="binding site" evidence="1">
    <location>
        <position position="48"/>
    </location>
    <ligand>
        <name>dimethylallyl diphosphate</name>
        <dbReference type="ChEBI" id="CHEBI:57623"/>
    </ligand>
</feature>
<feature type="binding site" evidence="1">
    <location>
        <position position="48"/>
    </location>
    <ligand>
        <name>isopentenyl diphosphate</name>
        <dbReference type="ChEBI" id="CHEBI:128769"/>
    </ligand>
</feature>
<feature type="binding site" evidence="1">
    <location>
        <position position="99"/>
    </location>
    <ligand>
        <name>(2E)-4-hydroxy-3-methylbut-2-enyl diphosphate</name>
        <dbReference type="ChEBI" id="CHEBI:128753"/>
    </ligand>
</feature>
<feature type="binding site" evidence="1">
    <location>
        <position position="99"/>
    </location>
    <ligand>
        <name>dimethylallyl diphosphate</name>
        <dbReference type="ChEBI" id="CHEBI:57623"/>
    </ligand>
</feature>
<feature type="binding site" evidence="1">
    <location>
        <position position="99"/>
    </location>
    <ligand>
        <name>isopentenyl diphosphate</name>
        <dbReference type="ChEBI" id="CHEBI:128769"/>
    </ligand>
</feature>
<feature type="binding site" evidence="1">
    <location>
        <position position="121"/>
    </location>
    <ligand>
        <name>[4Fe-4S] cluster</name>
        <dbReference type="ChEBI" id="CHEBI:49883"/>
    </ligand>
</feature>
<feature type="binding site" evidence="1">
    <location>
        <position position="149"/>
    </location>
    <ligand>
        <name>(2E)-4-hydroxy-3-methylbut-2-enyl diphosphate</name>
        <dbReference type="ChEBI" id="CHEBI:128753"/>
    </ligand>
</feature>
<feature type="binding site" evidence="1">
    <location>
        <position position="149"/>
    </location>
    <ligand>
        <name>dimethylallyl diphosphate</name>
        <dbReference type="ChEBI" id="CHEBI:57623"/>
    </ligand>
</feature>
<feature type="binding site" evidence="1">
    <location>
        <position position="149"/>
    </location>
    <ligand>
        <name>isopentenyl diphosphate</name>
        <dbReference type="ChEBI" id="CHEBI:128769"/>
    </ligand>
</feature>
<feature type="binding site" evidence="1">
    <location>
        <position position="208"/>
    </location>
    <ligand>
        <name>(2E)-4-hydroxy-3-methylbut-2-enyl diphosphate</name>
        <dbReference type="ChEBI" id="CHEBI:128753"/>
    </ligand>
</feature>
<feature type="binding site" evidence="1">
    <location>
        <position position="236"/>
    </location>
    <ligand>
        <name>[4Fe-4S] cluster</name>
        <dbReference type="ChEBI" id="CHEBI:49883"/>
    </ligand>
</feature>
<feature type="binding site" evidence="1">
    <location>
        <position position="264"/>
    </location>
    <ligand>
        <name>(2E)-4-hydroxy-3-methylbut-2-enyl diphosphate</name>
        <dbReference type="ChEBI" id="CHEBI:128753"/>
    </ligand>
</feature>
<feature type="binding site" evidence="1">
    <location>
        <position position="264"/>
    </location>
    <ligand>
        <name>dimethylallyl diphosphate</name>
        <dbReference type="ChEBI" id="CHEBI:57623"/>
    </ligand>
</feature>
<feature type="binding site" evidence="1">
    <location>
        <position position="264"/>
    </location>
    <ligand>
        <name>isopentenyl diphosphate</name>
        <dbReference type="ChEBI" id="CHEBI:128769"/>
    </ligand>
</feature>
<feature type="binding site" evidence="1">
    <location>
        <position position="266"/>
    </location>
    <ligand>
        <name>(2E)-4-hydroxy-3-methylbut-2-enyl diphosphate</name>
        <dbReference type="ChEBI" id="CHEBI:128753"/>
    </ligand>
</feature>
<feature type="binding site" evidence="1">
    <location>
        <position position="266"/>
    </location>
    <ligand>
        <name>dimethylallyl diphosphate</name>
        <dbReference type="ChEBI" id="CHEBI:57623"/>
    </ligand>
</feature>
<feature type="binding site" evidence="1">
    <location>
        <position position="266"/>
    </location>
    <ligand>
        <name>isopentenyl diphosphate</name>
        <dbReference type="ChEBI" id="CHEBI:128769"/>
    </ligand>
</feature>
<feature type="binding site" evidence="1">
    <location>
        <position position="307"/>
    </location>
    <ligand>
        <name>(2E)-4-hydroxy-3-methylbut-2-enyl diphosphate</name>
        <dbReference type="ChEBI" id="CHEBI:128753"/>
    </ligand>
</feature>
<feature type="binding site" evidence="1">
    <location>
        <position position="307"/>
    </location>
    <ligand>
        <name>dimethylallyl diphosphate</name>
        <dbReference type="ChEBI" id="CHEBI:57623"/>
    </ligand>
</feature>
<feature type="binding site" evidence="1">
    <location>
        <position position="307"/>
    </location>
    <ligand>
        <name>isopentenyl diphosphate</name>
        <dbReference type="ChEBI" id="CHEBI:128769"/>
    </ligand>
</feature>
<comment type="function">
    <text evidence="1">Catalyzes the conversion of 1-hydroxy-2-methyl-2-(E)-butenyl 4-diphosphate (HMBPP) into a mixture of isopentenyl diphosphate (IPP) and dimethylallyl diphosphate (DMAPP). Acts in the terminal step of the DOXP/MEP pathway for isoprenoid precursor biosynthesis.</text>
</comment>
<comment type="catalytic activity">
    <reaction evidence="1">
        <text>isopentenyl diphosphate + 2 oxidized [2Fe-2S]-[ferredoxin] + H2O = (2E)-4-hydroxy-3-methylbut-2-enyl diphosphate + 2 reduced [2Fe-2S]-[ferredoxin] + 2 H(+)</text>
        <dbReference type="Rhea" id="RHEA:24488"/>
        <dbReference type="Rhea" id="RHEA-COMP:10000"/>
        <dbReference type="Rhea" id="RHEA-COMP:10001"/>
        <dbReference type="ChEBI" id="CHEBI:15377"/>
        <dbReference type="ChEBI" id="CHEBI:15378"/>
        <dbReference type="ChEBI" id="CHEBI:33737"/>
        <dbReference type="ChEBI" id="CHEBI:33738"/>
        <dbReference type="ChEBI" id="CHEBI:128753"/>
        <dbReference type="ChEBI" id="CHEBI:128769"/>
        <dbReference type="EC" id="1.17.7.4"/>
    </reaction>
</comment>
<comment type="catalytic activity">
    <reaction evidence="1">
        <text>dimethylallyl diphosphate + 2 oxidized [2Fe-2S]-[ferredoxin] + H2O = (2E)-4-hydroxy-3-methylbut-2-enyl diphosphate + 2 reduced [2Fe-2S]-[ferredoxin] + 2 H(+)</text>
        <dbReference type="Rhea" id="RHEA:24825"/>
        <dbReference type="Rhea" id="RHEA-COMP:10000"/>
        <dbReference type="Rhea" id="RHEA-COMP:10001"/>
        <dbReference type="ChEBI" id="CHEBI:15377"/>
        <dbReference type="ChEBI" id="CHEBI:15378"/>
        <dbReference type="ChEBI" id="CHEBI:33737"/>
        <dbReference type="ChEBI" id="CHEBI:33738"/>
        <dbReference type="ChEBI" id="CHEBI:57623"/>
        <dbReference type="ChEBI" id="CHEBI:128753"/>
        <dbReference type="EC" id="1.17.7.4"/>
    </reaction>
</comment>
<comment type="cofactor">
    <cofactor evidence="1">
        <name>[4Fe-4S] cluster</name>
        <dbReference type="ChEBI" id="CHEBI:49883"/>
    </cofactor>
    <text evidence="1">Binds 1 [4Fe-4S] cluster per subunit.</text>
</comment>
<comment type="pathway">
    <text evidence="1">Isoprenoid biosynthesis; dimethylallyl diphosphate biosynthesis; dimethylallyl diphosphate from (2E)-4-hydroxy-3-methylbutenyl diphosphate: step 1/1.</text>
</comment>
<comment type="pathway">
    <text evidence="1">Isoprenoid biosynthesis; isopentenyl diphosphate biosynthesis via DXP pathway; isopentenyl diphosphate from 1-deoxy-D-xylulose 5-phosphate: step 6/6.</text>
</comment>
<comment type="similarity">
    <text evidence="1">Belongs to the IspH family.</text>
</comment>
<reference key="1">
    <citation type="journal article" date="1998" name="Science">
        <title>Complete genome sequence of Treponema pallidum, the syphilis spirochete.</title>
        <authorList>
            <person name="Fraser C.M."/>
            <person name="Norris S.J."/>
            <person name="Weinstock G.M."/>
            <person name="White O."/>
            <person name="Sutton G.G."/>
            <person name="Dodson R.J."/>
            <person name="Gwinn M.L."/>
            <person name="Hickey E.K."/>
            <person name="Clayton R.A."/>
            <person name="Ketchum K.A."/>
            <person name="Sodergren E."/>
            <person name="Hardham J.M."/>
            <person name="McLeod M.P."/>
            <person name="Salzberg S.L."/>
            <person name="Peterson J.D."/>
            <person name="Khalak H.G."/>
            <person name="Richardson D.L."/>
            <person name="Howell J.K."/>
            <person name="Chidambaram M."/>
            <person name="Utterback T.R."/>
            <person name="McDonald L.A."/>
            <person name="Artiach P."/>
            <person name="Bowman C."/>
            <person name="Cotton M.D."/>
            <person name="Fujii C."/>
            <person name="Garland S.A."/>
            <person name="Hatch B."/>
            <person name="Horst K."/>
            <person name="Roberts K.M."/>
            <person name="Sandusky M."/>
            <person name="Weidman J.F."/>
            <person name="Smith H.O."/>
            <person name="Venter J.C."/>
        </authorList>
    </citation>
    <scope>NUCLEOTIDE SEQUENCE [LARGE SCALE GENOMIC DNA]</scope>
    <source>
        <strain>Nichols</strain>
    </source>
</reference>
<proteinExistence type="inferred from homology"/>
<accession>O83558</accession>
<gene>
    <name evidence="1" type="primary">ispH</name>
    <name type="synonym">lytB</name>
    <name type="ordered locus">TP_0547</name>
</gene>
<keyword id="KW-0004">4Fe-4S</keyword>
<keyword id="KW-0408">Iron</keyword>
<keyword id="KW-0411">Iron-sulfur</keyword>
<keyword id="KW-0414">Isoprene biosynthesis</keyword>
<keyword id="KW-0479">Metal-binding</keyword>
<keyword id="KW-0560">Oxidoreductase</keyword>
<keyword id="KW-1185">Reference proteome</keyword>
<organism>
    <name type="scientific">Treponema pallidum (strain Nichols)</name>
    <dbReference type="NCBI Taxonomy" id="243276"/>
    <lineage>
        <taxon>Bacteria</taxon>
        <taxon>Pseudomonadati</taxon>
        <taxon>Spirochaetota</taxon>
        <taxon>Spirochaetia</taxon>
        <taxon>Spirochaetales</taxon>
        <taxon>Treponemataceae</taxon>
        <taxon>Treponema</taxon>
    </lineage>
</organism>
<protein>
    <recommendedName>
        <fullName evidence="1">4-hydroxy-3-methylbut-2-enyl diphosphate reductase</fullName>
        <shortName evidence="1">HMBPP reductase</shortName>
        <ecNumber evidence="1">1.17.7.4</ecNumber>
    </recommendedName>
</protein>
<dbReference type="EC" id="1.17.7.4" evidence="1"/>
<dbReference type="EMBL" id="AE000520">
    <property type="protein sequence ID" value="AAC65533.1"/>
    <property type="molecule type" value="Genomic_DNA"/>
</dbReference>
<dbReference type="PIR" id="G71310">
    <property type="entry name" value="G71310"/>
</dbReference>
<dbReference type="RefSeq" id="WP_010881994.1">
    <property type="nucleotide sequence ID" value="NC_021490.2"/>
</dbReference>
<dbReference type="SMR" id="O83558"/>
<dbReference type="IntAct" id="O83558">
    <property type="interactions" value="10"/>
</dbReference>
<dbReference type="STRING" id="243276.TP_0547"/>
<dbReference type="EnsemblBacteria" id="AAC65533">
    <property type="protein sequence ID" value="AAC65533"/>
    <property type="gene ID" value="TP_0547"/>
</dbReference>
<dbReference type="GeneID" id="93876316"/>
<dbReference type="KEGG" id="tpa:TP_0547"/>
<dbReference type="KEGG" id="tpw:TPANIC_0547"/>
<dbReference type="eggNOG" id="COG0761">
    <property type="taxonomic scope" value="Bacteria"/>
</dbReference>
<dbReference type="HOGENOM" id="CLU_027486_0_1_12"/>
<dbReference type="OrthoDB" id="9777362at2"/>
<dbReference type="UniPathway" id="UPA00056">
    <property type="reaction ID" value="UER00097"/>
</dbReference>
<dbReference type="UniPathway" id="UPA00059">
    <property type="reaction ID" value="UER00105"/>
</dbReference>
<dbReference type="Proteomes" id="UP000000811">
    <property type="component" value="Chromosome"/>
</dbReference>
<dbReference type="GO" id="GO:0051539">
    <property type="term" value="F:4 iron, 4 sulfur cluster binding"/>
    <property type="evidence" value="ECO:0007669"/>
    <property type="project" value="UniProtKB-UniRule"/>
</dbReference>
<dbReference type="GO" id="GO:0051745">
    <property type="term" value="F:4-hydroxy-3-methylbut-2-enyl diphosphate reductase activity"/>
    <property type="evidence" value="ECO:0007669"/>
    <property type="project" value="UniProtKB-UniRule"/>
</dbReference>
<dbReference type="GO" id="GO:0046872">
    <property type="term" value="F:metal ion binding"/>
    <property type="evidence" value="ECO:0007669"/>
    <property type="project" value="UniProtKB-KW"/>
</dbReference>
<dbReference type="GO" id="GO:0050992">
    <property type="term" value="P:dimethylallyl diphosphate biosynthetic process"/>
    <property type="evidence" value="ECO:0007669"/>
    <property type="project" value="UniProtKB-UniRule"/>
</dbReference>
<dbReference type="GO" id="GO:0019288">
    <property type="term" value="P:isopentenyl diphosphate biosynthetic process, methylerythritol 4-phosphate pathway"/>
    <property type="evidence" value="ECO:0007669"/>
    <property type="project" value="UniProtKB-UniRule"/>
</dbReference>
<dbReference type="GO" id="GO:0016114">
    <property type="term" value="P:terpenoid biosynthetic process"/>
    <property type="evidence" value="ECO:0007669"/>
    <property type="project" value="UniProtKB-UniRule"/>
</dbReference>
<dbReference type="CDD" id="cd13944">
    <property type="entry name" value="lytB_ispH"/>
    <property type="match status" value="1"/>
</dbReference>
<dbReference type="Gene3D" id="3.40.50.11270">
    <property type="match status" value="1"/>
</dbReference>
<dbReference type="Gene3D" id="3.40.1010.20">
    <property type="entry name" value="4-hydroxy-3-methylbut-2-enyl diphosphate reductase, catalytic domain"/>
    <property type="match status" value="2"/>
</dbReference>
<dbReference type="HAMAP" id="MF_00191">
    <property type="entry name" value="IspH"/>
    <property type="match status" value="1"/>
</dbReference>
<dbReference type="InterPro" id="IPR003451">
    <property type="entry name" value="LytB/IspH"/>
</dbReference>
<dbReference type="NCBIfam" id="TIGR00216">
    <property type="entry name" value="ispH_lytB"/>
    <property type="match status" value="1"/>
</dbReference>
<dbReference type="PANTHER" id="PTHR30426">
    <property type="entry name" value="4-HYDROXY-3-METHYLBUT-2-ENYL DIPHOSPHATE REDUCTASE"/>
    <property type="match status" value="1"/>
</dbReference>
<dbReference type="PANTHER" id="PTHR30426:SF0">
    <property type="entry name" value="4-HYDROXY-3-METHYLBUT-2-ENYL DIPHOSPHATE REDUCTASE"/>
    <property type="match status" value="1"/>
</dbReference>
<dbReference type="Pfam" id="PF02401">
    <property type="entry name" value="LYTB"/>
    <property type="match status" value="1"/>
</dbReference>